<name>IF2_MYCTA</name>
<proteinExistence type="inferred from homology"/>
<dbReference type="EMBL" id="CP000611">
    <property type="protein sequence ID" value="ABQ74641.1"/>
    <property type="molecule type" value="Genomic_DNA"/>
</dbReference>
<dbReference type="RefSeq" id="WP_003899505.1">
    <property type="nucleotide sequence ID" value="NZ_CP016972.1"/>
</dbReference>
<dbReference type="SMR" id="A5U6J1"/>
<dbReference type="GeneID" id="45426826"/>
<dbReference type="KEGG" id="mra:MRA_2862"/>
<dbReference type="eggNOG" id="COG0481">
    <property type="taxonomic scope" value="Bacteria"/>
</dbReference>
<dbReference type="HOGENOM" id="CLU_006301_9_2_11"/>
<dbReference type="Proteomes" id="UP000001988">
    <property type="component" value="Chromosome"/>
</dbReference>
<dbReference type="GO" id="GO:0005829">
    <property type="term" value="C:cytosol"/>
    <property type="evidence" value="ECO:0007669"/>
    <property type="project" value="TreeGrafter"/>
</dbReference>
<dbReference type="GO" id="GO:0005525">
    <property type="term" value="F:GTP binding"/>
    <property type="evidence" value="ECO:0007669"/>
    <property type="project" value="UniProtKB-KW"/>
</dbReference>
<dbReference type="GO" id="GO:0003924">
    <property type="term" value="F:GTPase activity"/>
    <property type="evidence" value="ECO:0007669"/>
    <property type="project" value="UniProtKB-UniRule"/>
</dbReference>
<dbReference type="GO" id="GO:0003743">
    <property type="term" value="F:translation initiation factor activity"/>
    <property type="evidence" value="ECO:0007669"/>
    <property type="project" value="UniProtKB-UniRule"/>
</dbReference>
<dbReference type="CDD" id="cd01887">
    <property type="entry name" value="IF2_eIF5B"/>
    <property type="match status" value="1"/>
</dbReference>
<dbReference type="CDD" id="cd03702">
    <property type="entry name" value="IF2_mtIF2_II"/>
    <property type="match status" value="1"/>
</dbReference>
<dbReference type="CDD" id="cd03692">
    <property type="entry name" value="mtIF2_IVc"/>
    <property type="match status" value="1"/>
</dbReference>
<dbReference type="FunFam" id="1.10.10.2480:FF:000003">
    <property type="entry name" value="Translation initiation factor IF-2"/>
    <property type="match status" value="1"/>
</dbReference>
<dbReference type="FunFam" id="2.40.30.10:FF:000007">
    <property type="entry name" value="Translation initiation factor IF-2"/>
    <property type="match status" value="1"/>
</dbReference>
<dbReference type="FunFam" id="2.40.30.10:FF:000008">
    <property type="entry name" value="Translation initiation factor IF-2"/>
    <property type="match status" value="1"/>
</dbReference>
<dbReference type="FunFam" id="3.40.50.10050:FF:000001">
    <property type="entry name" value="Translation initiation factor IF-2"/>
    <property type="match status" value="1"/>
</dbReference>
<dbReference type="FunFam" id="3.40.50.300:FF:000019">
    <property type="entry name" value="Translation initiation factor IF-2"/>
    <property type="match status" value="1"/>
</dbReference>
<dbReference type="Gene3D" id="1.10.10.2480">
    <property type="match status" value="1"/>
</dbReference>
<dbReference type="Gene3D" id="3.40.50.300">
    <property type="entry name" value="P-loop containing nucleotide triphosphate hydrolases"/>
    <property type="match status" value="1"/>
</dbReference>
<dbReference type="Gene3D" id="2.40.30.10">
    <property type="entry name" value="Translation factors"/>
    <property type="match status" value="2"/>
</dbReference>
<dbReference type="Gene3D" id="3.40.50.10050">
    <property type="entry name" value="Translation initiation factor IF- 2, domain 3"/>
    <property type="match status" value="1"/>
</dbReference>
<dbReference type="HAMAP" id="MF_00100_B">
    <property type="entry name" value="IF_2_B"/>
    <property type="match status" value="1"/>
</dbReference>
<dbReference type="InterPro" id="IPR053905">
    <property type="entry name" value="EF-G-like_DII"/>
</dbReference>
<dbReference type="InterPro" id="IPR044145">
    <property type="entry name" value="IF2_II"/>
</dbReference>
<dbReference type="InterPro" id="IPR006847">
    <property type="entry name" value="IF2_N"/>
</dbReference>
<dbReference type="InterPro" id="IPR027417">
    <property type="entry name" value="P-loop_NTPase"/>
</dbReference>
<dbReference type="InterPro" id="IPR005225">
    <property type="entry name" value="Small_GTP-bd"/>
</dbReference>
<dbReference type="InterPro" id="IPR000795">
    <property type="entry name" value="T_Tr_GTP-bd_dom"/>
</dbReference>
<dbReference type="InterPro" id="IPR000178">
    <property type="entry name" value="TF_IF2_bacterial-like"/>
</dbReference>
<dbReference type="InterPro" id="IPR015760">
    <property type="entry name" value="TIF_IF2"/>
</dbReference>
<dbReference type="InterPro" id="IPR023115">
    <property type="entry name" value="TIF_IF2_dom3"/>
</dbReference>
<dbReference type="InterPro" id="IPR036925">
    <property type="entry name" value="TIF_IF2_dom3_sf"/>
</dbReference>
<dbReference type="InterPro" id="IPR009000">
    <property type="entry name" value="Transl_B-barrel_sf"/>
</dbReference>
<dbReference type="NCBIfam" id="TIGR00487">
    <property type="entry name" value="IF-2"/>
    <property type="match status" value="1"/>
</dbReference>
<dbReference type="NCBIfam" id="TIGR00231">
    <property type="entry name" value="small_GTP"/>
    <property type="match status" value="1"/>
</dbReference>
<dbReference type="PANTHER" id="PTHR43381:SF5">
    <property type="entry name" value="TR-TYPE G DOMAIN-CONTAINING PROTEIN"/>
    <property type="match status" value="1"/>
</dbReference>
<dbReference type="PANTHER" id="PTHR43381">
    <property type="entry name" value="TRANSLATION INITIATION FACTOR IF-2-RELATED"/>
    <property type="match status" value="1"/>
</dbReference>
<dbReference type="Pfam" id="PF22042">
    <property type="entry name" value="EF-G_D2"/>
    <property type="match status" value="1"/>
</dbReference>
<dbReference type="Pfam" id="PF00009">
    <property type="entry name" value="GTP_EFTU"/>
    <property type="match status" value="1"/>
</dbReference>
<dbReference type="Pfam" id="PF11987">
    <property type="entry name" value="IF-2"/>
    <property type="match status" value="1"/>
</dbReference>
<dbReference type="Pfam" id="PF04760">
    <property type="entry name" value="IF2_N"/>
    <property type="match status" value="2"/>
</dbReference>
<dbReference type="PRINTS" id="PR00315">
    <property type="entry name" value="ELONGATNFCT"/>
</dbReference>
<dbReference type="SUPFAM" id="SSF52156">
    <property type="entry name" value="Initiation factor IF2/eIF5b, domain 3"/>
    <property type="match status" value="1"/>
</dbReference>
<dbReference type="SUPFAM" id="SSF52540">
    <property type="entry name" value="P-loop containing nucleoside triphosphate hydrolases"/>
    <property type="match status" value="1"/>
</dbReference>
<dbReference type="SUPFAM" id="SSF50447">
    <property type="entry name" value="Translation proteins"/>
    <property type="match status" value="2"/>
</dbReference>
<dbReference type="PROSITE" id="PS51722">
    <property type="entry name" value="G_TR_2"/>
    <property type="match status" value="1"/>
</dbReference>
<dbReference type="PROSITE" id="PS01176">
    <property type="entry name" value="IF2"/>
    <property type="match status" value="1"/>
</dbReference>
<keyword id="KW-0963">Cytoplasm</keyword>
<keyword id="KW-0342">GTP-binding</keyword>
<keyword id="KW-0396">Initiation factor</keyword>
<keyword id="KW-0547">Nucleotide-binding</keyword>
<keyword id="KW-0648">Protein biosynthesis</keyword>
<keyword id="KW-1185">Reference proteome</keyword>
<reference key="1">
    <citation type="journal article" date="2008" name="PLoS ONE">
        <title>Genetic basis of virulence attenuation revealed by comparative genomic analysis of Mycobacterium tuberculosis strain H37Ra versus H37Rv.</title>
        <authorList>
            <person name="Zheng H."/>
            <person name="Lu L."/>
            <person name="Wang B."/>
            <person name="Pu S."/>
            <person name="Zhang X."/>
            <person name="Zhu G."/>
            <person name="Shi W."/>
            <person name="Zhang L."/>
            <person name="Wang H."/>
            <person name="Wang S."/>
            <person name="Zhao G."/>
            <person name="Zhang Y."/>
        </authorList>
    </citation>
    <scope>NUCLEOTIDE SEQUENCE [LARGE SCALE GENOMIC DNA]</scope>
    <source>
        <strain>ATCC 25177 / H37Ra</strain>
    </source>
</reference>
<organism>
    <name type="scientific">Mycobacterium tuberculosis (strain ATCC 25177 / H37Ra)</name>
    <dbReference type="NCBI Taxonomy" id="419947"/>
    <lineage>
        <taxon>Bacteria</taxon>
        <taxon>Bacillati</taxon>
        <taxon>Actinomycetota</taxon>
        <taxon>Actinomycetes</taxon>
        <taxon>Mycobacteriales</taxon>
        <taxon>Mycobacteriaceae</taxon>
        <taxon>Mycobacterium</taxon>
        <taxon>Mycobacterium tuberculosis complex</taxon>
    </lineage>
</organism>
<feature type="chain" id="PRO_1000008284" description="Translation initiation factor IF-2">
    <location>
        <begin position="1"/>
        <end position="900"/>
    </location>
</feature>
<feature type="domain" description="tr-type G">
    <location>
        <begin position="396"/>
        <end position="567"/>
    </location>
</feature>
<feature type="region of interest" description="Disordered" evidence="3">
    <location>
        <begin position="30"/>
        <end position="77"/>
    </location>
</feature>
<feature type="region of interest" description="Disordered" evidence="3">
    <location>
        <begin position="89"/>
        <end position="291"/>
    </location>
</feature>
<feature type="region of interest" description="G1" evidence="1">
    <location>
        <begin position="405"/>
        <end position="412"/>
    </location>
</feature>
<feature type="region of interest" description="G2" evidence="1">
    <location>
        <begin position="430"/>
        <end position="434"/>
    </location>
</feature>
<feature type="region of interest" description="G3" evidence="1">
    <location>
        <begin position="455"/>
        <end position="458"/>
    </location>
</feature>
<feature type="region of interest" description="G4" evidence="1">
    <location>
        <begin position="509"/>
        <end position="512"/>
    </location>
</feature>
<feature type="region of interest" description="G5" evidence="1">
    <location>
        <begin position="545"/>
        <end position="547"/>
    </location>
</feature>
<feature type="compositionally biased region" description="Low complexity" evidence="3">
    <location>
        <begin position="89"/>
        <end position="112"/>
    </location>
</feature>
<feature type="compositionally biased region" description="Pro residues" evidence="3">
    <location>
        <begin position="113"/>
        <end position="129"/>
    </location>
</feature>
<feature type="compositionally biased region" description="Low complexity" evidence="3">
    <location>
        <begin position="175"/>
        <end position="187"/>
    </location>
</feature>
<feature type="compositionally biased region" description="Gly residues" evidence="3">
    <location>
        <begin position="215"/>
        <end position="271"/>
    </location>
</feature>
<feature type="compositionally biased region" description="Basic residues" evidence="3">
    <location>
        <begin position="275"/>
        <end position="284"/>
    </location>
</feature>
<feature type="binding site" evidence="2">
    <location>
        <begin position="405"/>
        <end position="412"/>
    </location>
    <ligand>
        <name>GTP</name>
        <dbReference type="ChEBI" id="CHEBI:37565"/>
    </ligand>
</feature>
<feature type="binding site" evidence="2">
    <location>
        <begin position="455"/>
        <end position="459"/>
    </location>
    <ligand>
        <name>GTP</name>
        <dbReference type="ChEBI" id="CHEBI:37565"/>
    </ligand>
</feature>
<feature type="binding site" evidence="2">
    <location>
        <begin position="509"/>
        <end position="512"/>
    </location>
    <ligand>
        <name>GTP</name>
        <dbReference type="ChEBI" id="CHEBI:37565"/>
    </ligand>
</feature>
<protein>
    <recommendedName>
        <fullName evidence="2">Translation initiation factor IF-2</fullName>
    </recommendedName>
</protein>
<gene>
    <name evidence="2" type="primary">infB</name>
    <name type="ordered locus">MRA_2862</name>
</gene>
<sequence length="900" mass="94041">MAAGKARVHELAKELGVTSKEVLARLSEQGEFVKSASSTVEAPVARRLRESFGGSKPAPAKGTAKSPGKGPDKSLDKALDAAIDMAAGNGKATAAPAKAADSGGAAIVSPTTPAAPEPPTAVPPSPQAPHPGMAPGARPGPVPKPGIRTPRVGNNPFSSAQPADRPIPRPPAPRPGTARPGVPRPGASPGSMPPRPGGAVGGARPPRPGAPRPGGRPGAPGAGRSDAGGGNYRGGGVGAAPGTGFRGRPGGGGGGRPGQRGGAAGAFGRPGGAPRRGRKSKRQKRQEYDSMQAPVVGGVRLPHGNGETIRLARGASLSDFADKIDANPAALVQALFNLGEMVTATQSVGDETLELLGSEMNYNVQVVSPEDEDRELLESFDLSYGEDEGGEEDLQVRPPVVTVMGHVDHGKTRLLDTIRKANVREAEAGGITQHIGAYQVAVDLDGSQRLITFIDTPGHEAFTAMRARGAKATDIAILVVAADDGVMPQTVEAINHAQAADVPIVVAVNKIDKEGADPAKIRGQLTEYGLVPEEFGGDTMFVDISAKQGTNIEALEEAVLLTADAALDLRANPDMEAQGVAIEAHLDRGRGPVATVLVQRGTLRVGDSVVAGDAYGRVRRMVDEHGEDVEVALPSRPVQVIGFTSVPGAGDNFLVVDEDRIARQIADRRSARKRNALAARSRKRISLEDLDSALKETSQLNLILKGDNAGTVEALEEALMGIQVDDEVVLRVIDRGVGGITETNVNLASASDAVIIGFNVRAEGKATELASREGVEIRYYSVIYQAIDEIEQALRGLLKPIYEENQLGRAEIRALFRSSKVGLIAGCLVTSGVMRRNAKARLLRDNIVVAENLSIASLRREKDDVTEVRDGFECGLTLGYADIKEGDVIESYELVQKERA</sequence>
<accession>A5U6J1</accession>
<comment type="function">
    <text evidence="2">One of the essential components for the initiation of protein synthesis. Protects formylmethionyl-tRNA from spontaneous hydrolysis and promotes its binding to the 30S ribosomal subunits. Also involved in the hydrolysis of GTP during the formation of the 70S ribosomal complex.</text>
</comment>
<comment type="subcellular location">
    <subcellularLocation>
        <location evidence="2">Cytoplasm</location>
    </subcellularLocation>
</comment>
<comment type="similarity">
    <text evidence="2">Belongs to the TRAFAC class translation factor GTPase superfamily. Classic translation factor GTPase family. IF-2 subfamily.</text>
</comment>
<evidence type="ECO:0000250" key="1"/>
<evidence type="ECO:0000255" key="2">
    <source>
        <dbReference type="HAMAP-Rule" id="MF_00100"/>
    </source>
</evidence>
<evidence type="ECO:0000256" key="3">
    <source>
        <dbReference type="SAM" id="MobiDB-lite"/>
    </source>
</evidence>